<accession>B0X9V1</accession>
<organism>
    <name type="scientific">Culex quinquefasciatus</name>
    <name type="common">Southern house mosquito</name>
    <name type="synonym">Culex pungens</name>
    <dbReference type="NCBI Taxonomy" id="7176"/>
    <lineage>
        <taxon>Eukaryota</taxon>
        <taxon>Metazoa</taxon>
        <taxon>Ecdysozoa</taxon>
        <taxon>Arthropoda</taxon>
        <taxon>Hexapoda</taxon>
        <taxon>Insecta</taxon>
        <taxon>Pterygota</taxon>
        <taxon>Neoptera</taxon>
        <taxon>Endopterygota</taxon>
        <taxon>Diptera</taxon>
        <taxon>Nematocera</taxon>
        <taxon>Culicoidea</taxon>
        <taxon>Culicidae</taxon>
        <taxon>Culicinae</taxon>
        <taxon>Culicini</taxon>
        <taxon>Culex</taxon>
        <taxon>Culex</taxon>
    </lineage>
</organism>
<name>FBSP1_CULQU</name>
<proteinExistence type="inferred from homology"/>
<protein>
    <recommendedName>
        <fullName evidence="2">F-box/SPRY domain-containing protein 1</fullName>
    </recommendedName>
</protein>
<reference evidence="6" key="1">
    <citation type="submission" date="2007-03" db="EMBL/GenBank/DDBJ databases">
        <title>Annotation of Culex pipiens quinquefasciatus.</title>
        <authorList>
            <consortium name="The Broad Institute Genome Sequencing Platform"/>
            <person name="Atkinson P.W."/>
            <person name="Hemingway J."/>
            <person name="Christensen B.M."/>
            <person name="Higgs S."/>
            <person name="Kodira C.D."/>
            <person name="Hannick L.I."/>
            <person name="Megy K."/>
            <person name="O'Leary S.B."/>
            <person name="Pearson M."/>
            <person name="Haas B.J."/>
            <person name="Mauceli E."/>
            <person name="Wortman J.R."/>
            <person name="Lee N.H."/>
            <person name="Guigo R."/>
            <person name="Stanke M."/>
            <person name="Alvarado L."/>
            <person name="Amedeo P."/>
            <person name="Antoine C.H."/>
            <person name="Arensburger P."/>
            <person name="Bidwell S.L."/>
            <person name="Crawford M."/>
            <person name="Camaro F."/>
            <person name="Devon K."/>
            <person name="Engels R."/>
            <person name="Hammond M."/>
            <person name="Howarth C."/>
            <person name="Koehrsen M."/>
            <person name="Lawson D."/>
            <person name="Montgomery P."/>
            <person name="Nene V."/>
            <person name="Nusbaum C."/>
            <person name="Puiu D."/>
            <person name="Romero-Severson J."/>
            <person name="Severson D.W."/>
            <person name="Shumway M."/>
            <person name="Sisk P."/>
            <person name="Stolte C."/>
            <person name="Zeng Q."/>
            <person name="Eisenstadt E."/>
            <person name="Fraser-Liggett C.M."/>
            <person name="Strausberg R."/>
            <person name="Galagan J."/>
            <person name="Birren B."/>
            <person name="Collins F.H."/>
        </authorList>
    </citation>
    <scope>NUCLEOTIDE SEQUENCE [LARGE SCALE GENOMIC DNA]</scope>
    <source>
        <strain evidence="6">JHB</strain>
    </source>
</reference>
<comment type="function">
    <text evidence="1">Required in the presynaptic motoneuron to down-regulate the levels of wnd and restrain synaptic terminal growth at the neuromuscular junction (NMJ).</text>
</comment>
<comment type="pathway">
    <text evidence="2">Protein modification; protein ubiquitination.</text>
</comment>
<comment type="subunit">
    <text evidence="2">Component of an E3 ubiquitin ligase complex composed of hiw and Fsn.</text>
</comment>
<comment type="subcellular location">
    <subcellularLocation>
        <location evidence="2">Synapse</location>
    </subcellularLocation>
</comment>
<comment type="similarity">
    <text evidence="5">Belongs to the FBXO45/Fsn family.</text>
</comment>
<gene>
    <name evidence="2" type="primary">Fsn</name>
    <name type="ORF">CPIJ016123</name>
</gene>
<feature type="chain" id="PRO_0000383309" description="F-box/SPRY domain-containing protein 1">
    <location>
        <begin position="1"/>
        <end position="258"/>
    </location>
</feature>
<feature type="domain" description="F-box" evidence="3">
    <location>
        <begin position="6"/>
        <end position="54"/>
    </location>
</feature>
<feature type="domain" description="B30.2/SPRY" evidence="4">
    <location>
        <begin position="64"/>
        <end position="256"/>
    </location>
</feature>
<dbReference type="EMBL" id="DS232551">
    <property type="protein sequence ID" value="EDS43303.1"/>
    <property type="molecule type" value="Genomic_DNA"/>
</dbReference>
<dbReference type="SMR" id="B0X9V1"/>
<dbReference type="FunCoup" id="B0X9V1">
    <property type="interactions" value="1171"/>
</dbReference>
<dbReference type="STRING" id="7176.B0X9V1"/>
<dbReference type="EnsemblMetazoa" id="CPIJ016123-RA">
    <property type="protein sequence ID" value="CPIJ016123-PA"/>
    <property type="gene ID" value="CPIJ016123"/>
</dbReference>
<dbReference type="EnsemblMetazoa" id="CQUJHB013350.R20740">
    <property type="protein sequence ID" value="CQUJHB013350.P20740"/>
    <property type="gene ID" value="CQUJHB013350"/>
</dbReference>
<dbReference type="EnsemblMetazoa" id="XM_001866388.2">
    <property type="protein sequence ID" value="XP_001866423.1"/>
    <property type="gene ID" value="LOC6049704"/>
</dbReference>
<dbReference type="GeneID" id="6049704"/>
<dbReference type="KEGG" id="cqu:CpipJ_CPIJ016123"/>
<dbReference type="CTD" id="36460"/>
<dbReference type="VEuPathDB" id="VectorBase:CPIJ016123"/>
<dbReference type="VEuPathDB" id="VectorBase:CQUJHB013350"/>
<dbReference type="eggNOG" id="KOG3953">
    <property type="taxonomic scope" value="Eukaryota"/>
</dbReference>
<dbReference type="HOGENOM" id="CLU_046756_1_0_1"/>
<dbReference type="InParanoid" id="B0X9V1"/>
<dbReference type="OMA" id="ATKRASM"/>
<dbReference type="OrthoDB" id="2398163at2759"/>
<dbReference type="PhylomeDB" id="B0X9V1"/>
<dbReference type="UniPathway" id="UPA00143"/>
<dbReference type="Proteomes" id="UP000002320">
    <property type="component" value="Unassembled WGS sequence"/>
</dbReference>
<dbReference type="GO" id="GO:0031594">
    <property type="term" value="C:neuromuscular junction"/>
    <property type="evidence" value="ECO:0000250"/>
    <property type="project" value="UniProtKB"/>
</dbReference>
<dbReference type="GO" id="GO:0019005">
    <property type="term" value="C:SCF ubiquitin ligase complex"/>
    <property type="evidence" value="ECO:0007669"/>
    <property type="project" value="TreeGrafter"/>
</dbReference>
<dbReference type="GO" id="GO:0045886">
    <property type="term" value="P:negative regulation of synaptic assembly at neuromuscular junction"/>
    <property type="evidence" value="ECO:0000250"/>
    <property type="project" value="UniProtKB"/>
</dbReference>
<dbReference type="GO" id="GO:0007274">
    <property type="term" value="P:neuromuscular synaptic transmission"/>
    <property type="evidence" value="ECO:0000250"/>
    <property type="project" value="UniProtKB"/>
</dbReference>
<dbReference type="GO" id="GO:0043161">
    <property type="term" value="P:proteasome-mediated ubiquitin-dependent protein catabolic process"/>
    <property type="evidence" value="ECO:0007669"/>
    <property type="project" value="TreeGrafter"/>
</dbReference>
<dbReference type="GO" id="GO:0016567">
    <property type="term" value="P:protein ubiquitination"/>
    <property type="evidence" value="ECO:0007669"/>
    <property type="project" value="UniProtKB-UniPathway"/>
</dbReference>
<dbReference type="GO" id="GO:0060386">
    <property type="term" value="P:synapse assembly involved in innervation"/>
    <property type="evidence" value="ECO:0007669"/>
    <property type="project" value="TreeGrafter"/>
</dbReference>
<dbReference type="CDD" id="cd22111">
    <property type="entry name" value="F-box_FBXO45"/>
    <property type="match status" value="1"/>
</dbReference>
<dbReference type="CDD" id="cd12907">
    <property type="entry name" value="SPRY_Fbox"/>
    <property type="match status" value="1"/>
</dbReference>
<dbReference type="FunFam" id="1.20.1280.50:FF:000055">
    <property type="entry name" value="F-box/SPRY domain-containing protein 1"/>
    <property type="match status" value="1"/>
</dbReference>
<dbReference type="FunFam" id="2.60.120.920:FF:000017">
    <property type="entry name" value="F-box/SPRY domain-containing protein 1"/>
    <property type="match status" value="1"/>
</dbReference>
<dbReference type="Gene3D" id="1.20.1280.50">
    <property type="match status" value="1"/>
</dbReference>
<dbReference type="Gene3D" id="2.60.120.920">
    <property type="match status" value="1"/>
</dbReference>
<dbReference type="InterPro" id="IPR001870">
    <property type="entry name" value="B30.2/SPRY"/>
</dbReference>
<dbReference type="InterPro" id="IPR043136">
    <property type="entry name" value="B30.2/SPRY_sf"/>
</dbReference>
<dbReference type="InterPro" id="IPR013320">
    <property type="entry name" value="ConA-like_dom_sf"/>
</dbReference>
<dbReference type="InterPro" id="IPR036047">
    <property type="entry name" value="F-box-like_dom_sf"/>
</dbReference>
<dbReference type="InterPro" id="IPR001810">
    <property type="entry name" value="F-box_dom"/>
</dbReference>
<dbReference type="InterPro" id="IPR050672">
    <property type="entry name" value="FBXO45-Fsn/SPSB_families"/>
</dbReference>
<dbReference type="InterPro" id="IPR003877">
    <property type="entry name" value="SPRY_dom"/>
</dbReference>
<dbReference type="InterPro" id="IPR035784">
    <property type="entry name" value="SPRY_FBXO45"/>
</dbReference>
<dbReference type="PANTHER" id="PTHR12245:SF7">
    <property type="entry name" value="F-BOX_SPRY DOMAIN-CONTAINING PROTEIN 1"/>
    <property type="match status" value="1"/>
</dbReference>
<dbReference type="PANTHER" id="PTHR12245">
    <property type="entry name" value="SPRY DOMAIN CONTAINING SOCS BOX PROTEIN"/>
    <property type="match status" value="1"/>
</dbReference>
<dbReference type="Pfam" id="PF12937">
    <property type="entry name" value="F-box-like"/>
    <property type="match status" value="1"/>
</dbReference>
<dbReference type="Pfam" id="PF00622">
    <property type="entry name" value="SPRY"/>
    <property type="match status" value="1"/>
</dbReference>
<dbReference type="SMART" id="SM00256">
    <property type="entry name" value="FBOX"/>
    <property type="match status" value="1"/>
</dbReference>
<dbReference type="SMART" id="SM00449">
    <property type="entry name" value="SPRY"/>
    <property type="match status" value="1"/>
</dbReference>
<dbReference type="SUPFAM" id="SSF49899">
    <property type="entry name" value="Concanavalin A-like lectins/glucanases"/>
    <property type="match status" value="1"/>
</dbReference>
<dbReference type="SUPFAM" id="SSF81383">
    <property type="entry name" value="F-box domain"/>
    <property type="match status" value="1"/>
</dbReference>
<dbReference type="PROSITE" id="PS50188">
    <property type="entry name" value="B302_SPRY"/>
    <property type="match status" value="1"/>
</dbReference>
<dbReference type="PROSITE" id="PS50181">
    <property type="entry name" value="FBOX"/>
    <property type="match status" value="1"/>
</dbReference>
<sequence length="258" mass="29186">MDDDLTEYAPDIPDNVLELIFSYLKLQDLRNCALVCKSWHRFLSDENNEVWRAQCMQKLSPDAFKTDLLSVVPTYKAKLRAFFHAWNPYDCSRHVYIKPNGFTLHRNPVAQSTDGSRGKIGFQHGRHAWEVRWEGPLGTVAVVGIATKDAAIQCHGYYALLGADDQSWGWNLVDNLLLHNGDAHGIYPLLNNAPKYKVGERIRVILDCDDNTLSFEKNYEFLGVAFTDLPDKVFYPTVAAVYGNTEISMVYLGPPLDG</sequence>
<keyword id="KW-0524">Neurogenesis</keyword>
<keyword id="KW-1185">Reference proteome</keyword>
<keyword id="KW-0770">Synapse</keyword>
<keyword id="KW-0833">Ubl conjugation pathway</keyword>
<evidence type="ECO:0000250" key="1"/>
<evidence type="ECO:0000250" key="2">
    <source>
        <dbReference type="UniProtKB" id="Q9V6L9"/>
    </source>
</evidence>
<evidence type="ECO:0000255" key="3">
    <source>
        <dbReference type="PROSITE-ProRule" id="PRU00080"/>
    </source>
</evidence>
<evidence type="ECO:0000255" key="4">
    <source>
        <dbReference type="PROSITE-ProRule" id="PRU00548"/>
    </source>
</evidence>
<evidence type="ECO:0000305" key="5"/>
<evidence type="ECO:0000312" key="6">
    <source>
        <dbReference type="EMBL" id="EDS43303.1"/>
    </source>
</evidence>